<evidence type="ECO:0000250" key="1"/>
<evidence type="ECO:0000250" key="2">
    <source>
        <dbReference type="UniProtKB" id="P00157"/>
    </source>
</evidence>
<evidence type="ECO:0000255" key="3">
    <source>
        <dbReference type="PROSITE-ProRule" id="PRU00967"/>
    </source>
</evidence>
<evidence type="ECO:0000255" key="4">
    <source>
        <dbReference type="PROSITE-ProRule" id="PRU00968"/>
    </source>
</evidence>
<evidence type="ECO:0000305" key="5"/>
<name>CYB_CAPHE</name>
<comment type="function">
    <text evidence="2">Component of the ubiquinol-cytochrome c reductase complex (complex III or cytochrome b-c1 complex) that is part of the mitochondrial respiratory chain. The b-c1 complex mediates electron transfer from ubiquinol to cytochrome c. Contributes to the generation of a proton gradient across the mitochondrial membrane that is then used for ATP synthesis.</text>
</comment>
<comment type="cofactor">
    <cofactor evidence="2">
        <name>heme b</name>
        <dbReference type="ChEBI" id="CHEBI:60344"/>
    </cofactor>
    <text evidence="2">Binds 2 heme b groups non-covalently.</text>
</comment>
<comment type="subunit">
    <text evidence="2">The cytochrome bc1 complex contains 11 subunits: 3 respiratory subunits (MT-CYB, CYC1 and UQCRFS1), 2 core proteins (UQCRC1 and UQCRC2) and 6 low-molecular weight proteins (UQCRH/QCR6, UQCRB/QCR7, UQCRQ/QCR8, UQCR10/QCR9, UQCR11/QCR10 and a cleavage product of UQCRFS1). This cytochrome bc1 complex then forms a dimer.</text>
</comment>
<comment type="subcellular location">
    <subcellularLocation>
        <location evidence="2">Mitochondrion inner membrane</location>
        <topology evidence="2">Multi-pass membrane protein</topology>
    </subcellularLocation>
</comment>
<comment type="miscellaneous">
    <text evidence="1">Heme 1 (or BL or b562) is low-potential and absorbs at about 562 nm, and heme 2 (or BH or b566) is high-potential and absorbs at about 566 nm.</text>
</comment>
<comment type="similarity">
    <text evidence="3 4">Belongs to the cytochrome b family.</text>
</comment>
<comment type="caution">
    <text evidence="2">The full-length protein contains only eight transmembrane helices, not nine as predicted by bioinformatics tools.</text>
</comment>
<protein>
    <recommendedName>
        <fullName>Cytochrome b</fullName>
    </recommendedName>
    <alternativeName>
        <fullName>Complex III subunit 3</fullName>
    </alternativeName>
    <alternativeName>
        <fullName>Complex III subunit III</fullName>
    </alternativeName>
    <alternativeName>
        <fullName>Cytochrome b-c1 complex subunit 3</fullName>
    </alternativeName>
    <alternativeName>
        <fullName>Ubiquinol-cytochrome-c reductase complex cytochrome b subunit</fullName>
    </alternativeName>
</protein>
<proteinExistence type="inferred from homology"/>
<organism>
    <name type="scientific">Capra hircus aegagrus</name>
    <name type="common">Wild goat</name>
    <name type="synonym">Capra aegagrus</name>
    <dbReference type="NCBI Taxonomy" id="9923"/>
    <lineage>
        <taxon>Eukaryota</taxon>
        <taxon>Metazoa</taxon>
        <taxon>Chordata</taxon>
        <taxon>Craniata</taxon>
        <taxon>Vertebrata</taxon>
        <taxon>Euteleostomi</taxon>
        <taxon>Mammalia</taxon>
        <taxon>Eutheria</taxon>
        <taxon>Laurasiatheria</taxon>
        <taxon>Artiodactyla</taxon>
        <taxon>Ruminantia</taxon>
        <taxon>Pecora</taxon>
        <taxon>Bovidae</taxon>
        <taxon>Caprinae</taxon>
        <taxon>Capra</taxon>
    </lineage>
</organism>
<geneLocation type="mitochondrion"/>
<sequence>MTNIRKTHPLMKIVNNTFIDLPTPSNISSWWNFGSLLGICLILQILTGLFLAMHYTSDTMTAFSSVTHICRDVNYGWIIRYMHANGASMFFICLFMHIGRGLYYGSYTFLETWNIGVILLLATMATAFMGYVLPWGQMSFWGATVITNLLSAIPYIGTNLVEWIWGGFSVDKATLTRFFAFHFILPFIITALAMVHLLFLHETGSNNPTGIPSDTDKIPFHPYYTIKDILGAMLLILVLMLLVLFTPDLLGDPDNYIPANPLNTPPHIKPEWYFLFAYAILRSIPNKLGGVLALVLSILILVLVPFLHTSKQRSMMFRPISQCMFWILVADLLTLTWIGGQPVEHPYIIIGQLASIMYFLIILVMMPAASTIENNLLKW</sequence>
<reference key="1">
    <citation type="submission" date="1996-03" db="EMBL/GenBank/DDBJ databases">
        <title>Phylogenetic relationship of Caprinae estimated by cytochrome b gene sequence analysis.</title>
        <authorList>
            <person name="Arai K."/>
            <person name="Munechika I."/>
            <person name="Ito I."/>
            <person name="Kikkawa A."/>
            <person name="Kanazawa T."/>
            <person name="Kosugiyama M."/>
        </authorList>
    </citation>
    <scope>NUCLEOTIDE SEQUENCE [GENOMIC DNA]</scope>
    <source>
        <tissue>Liver</tissue>
    </source>
</reference>
<reference key="2">
    <citation type="journal article" date="1997" name="Biochem. Genet.">
        <title>Bezoar (Capra aegagrus) is a matriarchal candidate for ancestor of domestic goat (Capra hircus): evidence from the mitochondrial DNA diversity.</title>
        <authorList>
            <person name="Takada T."/>
            <person name="Kikkawa Y."/>
            <person name="Yonekawa H."/>
            <person name="Kawakami S."/>
            <person name="Amano T."/>
        </authorList>
    </citation>
    <scope>NUCLEOTIDE SEQUENCE [GENOMIC DNA]</scope>
</reference>
<reference key="3">
    <citation type="journal article" date="1998" name="J. Mammal. Evol.">
        <title>Molecular systematics of the subfamily Caprinae (Artiodactyla, Bovidae) as determined from cytochrome b sequences.</title>
        <authorList>
            <person name="Hassanin A."/>
            <person name="Pasquet E."/>
            <person name="Vigne J.-D."/>
        </authorList>
    </citation>
    <scope>NUCLEOTIDE SEQUENCE [GENOMIC DNA]</scope>
</reference>
<gene>
    <name type="primary">MT-CYB</name>
    <name type="synonym">COB</name>
    <name type="synonym">CYTB</name>
    <name type="synonym">MTCYB</name>
</gene>
<keyword id="KW-0249">Electron transport</keyword>
<keyword id="KW-0349">Heme</keyword>
<keyword id="KW-0408">Iron</keyword>
<keyword id="KW-0472">Membrane</keyword>
<keyword id="KW-0479">Metal-binding</keyword>
<keyword id="KW-0496">Mitochondrion</keyword>
<keyword id="KW-0999">Mitochondrion inner membrane</keyword>
<keyword id="KW-0679">Respiratory chain</keyword>
<keyword id="KW-0812">Transmembrane</keyword>
<keyword id="KW-1133">Transmembrane helix</keyword>
<keyword id="KW-0813">Transport</keyword>
<keyword id="KW-0830">Ubiquinone</keyword>
<accession>O78789</accession>
<accession>O03404</accession>
<accession>Q34023</accession>
<feature type="chain" id="PRO_0000060719" description="Cytochrome b">
    <location>
        <begin position="1"/>
        <end position="379"/>
    </location>
</feature>
<feature type="transmembrane region" description="Helical" evidence="2">
    <location>
        <begin position="33"/>
        <end position="53"/>
    </location>
</feature>
<feature type="transmembrane region" description="Helical" evidence="2">
    <location>
        <begin position="77"/>
        <end position="98"/>
    </location>
</feature>
<feature type="transmembrane region" description="Helical" evidence="2">
    <location>
        <begin position="113"/>
        <end position="133"/>
    </location>
</feature>
<feature type="transmembrane region" description="Helical" evidence="2">
    <location>
        <begin position="178"/>
        <end position="198"/>
    </location>
</feature>
<feature type="transmembrane region" description="Helical" evidence="2">
    <location>
        <begin position="226"/>
        <end position="246"/>
    </location>
</feature>
<feature type="transmembrane region" description="Helical" evidence="2">
    <location>
        <begin position="288"/>
        <end position="308"/>
    </location>
</feature>
<feature type="transmembrane region" description="Helical" evidence="2">
    <location>
        <begin position="320"/>
        <end position="340"/>
    </location>
</feature>
<feature type="transmembrane region" description="Helical" evidence="2">
    <location>
        <begin position="347"/>
        <end position="367"/>
    </location>
</feature>
<feature type="binding site" description="axial binding residue" evidence="2">
    <location>
        <position position="83"/>
    </location>
    <ligand>
        <name>heme b</name>
        <dbReference type="ChEBI" id="CHEBI:60344"/>
        <label>b562</label>
    </ligand>
    <ligandPart>
        <name>Fe</name>
        <dbReference type="ChEBI" id="CHEBI:18248"/>
    </ligandPart>
</feature>
<feature type="binding site" description="axial binding residue" evidence="2">
    <location>
        <position position="97"/>
    </location>
    <ligand>
        <name>heme b</name>
        <dbReference type="ChEBI" id="CHEBI:60344"/>
        <label>b566</label>
    </ligand>
    <ligandPart>
        <name>Fe</name>
        <dbReference type="ChEBI" id="CHEBI:18248"/>
    </ligandPart>
</feature>
<feature type="binding site" description="axial binding residue" evidence="2">
    <location>
        <position position="182"/>
    </location>
    <ligand>
        <name>heme b</name>
        <dbReference type="ChEBI" id="CHEBI:60344"/>
        <label>b562</label>
    </ligand>
    <ligandPart>
        <name>Fe</name>
        <dbReference type="ChEBI" id="CHEBI:18248"/>
    </ligandPart>
</feature>
<feature type="binding site" description="axial binding residue" evidence="2">
    <location>
        <position position="196"/>
    </location>
    <ligand>
        <name>heme b</name>
        <dbReference type="ChEBI" id="CHEBI:60344"/>
        <label>b566</label>
    </ligand>
    <ligandPart>
        <name>Fe</name>
        <dbReference type="ChEBI" id="CHEBI:18248"/>
    </ligandPart>
</feature>
<feature type="binding site" evidence="2">
    <location>
        <position position="201"/>
    </location>
    <ligand>
        <name>a ubiquinone</name>
        <dbReference type="ChEBI" id="CHEBI:16389"/>
    </ligand>
</feature>
<feature type="sequence conflict" description="In Ref. 3; AAC31694." evidence="5" ref="3">
    <original>T</original>
    <variation>I</variation>
    <location>
        <position position="2"/>
    </location>
</feature>
<feature type="sequence conflict" description="In Ref. 3; AAC31694." evidence="5" ref="3">
    <original>T</original>
    <variation>A</variation>
    <location>
        <position position="17"/>
    </location>
</feature>
<feature type="sequence conflict" description="In Ref. 3; AAC31694." evidence="5" ref="3">
    <original>I</original>
    <variation>V</variation>
    <location>
        <position position="98"/>
    </location>
</feature>
<feature type="sequence conflict" description="In Ref. 3; AAC31694." evidence="5" ref="3">
    <original>T</original>
    <variation>A</variation>
    <location>
        <position position="190"/>
    </location>
</feature>
<feature type="sequence conflict" description="In Ref. 1; BAA12254." evidence="5" ref="1">
    <original>A</original>
    <variation>G</variation>
    <location>
        <position position="191"/>
    </location>
</feature>
<feature type="sequence conflict" description="In Ref. 3; AAC31694." evidence="5" ref="3">
    <original>A</original>
    <variation>I</variation>
    <location>
        <position position="232"/>
    </location>
</feature>
<feature type="sequence conflict" description="In Ref. 3; AAC31694." evidence="5" ref="3">
    <original>I</original>
    <variation>T</variation>
    <location>
        <position position="257"/>
    </location>
</feature>
<feature type="sequence conflict" description="In Ref. 1; BAA12254." evidence="5" ref="1">
    <original>A</original>
    <variation>G</variation>
    <location>
        <position position="277"/>
    </location>
</feature>
<feature type="sequence conflict" description="In Ref. 3; AAC31694." evidence="5" ref="3">
    <original>M</original>
    <variation>V</variation>
    <location>
        <position position="324"/>
    </location>
</feature>
<feature type="sequence conflict" description="In Ref. 3; AAC31694." evidence="5" ref="3">
    <original>A</original>
    <variation>V</variation>
    <location>
        <position position="368"/>
    </location>
</feature>
<dbReference type="EMBL" id="D84204">
    <property type="protein sequence ID" value="BAA12254.1"/>
    <property type="molecule type" value="Genomic_DNA"/>
</dbReference>
<dbReference type="EMBL" id="AB004069">
    <property type="protein sequence ID" value="BAA20347.1"/>
    <property type="molecule type" value="Genomic_DNA"/>
</dbReference>
<dbReference type="EMBL" id="AF034739">
    <property type="protein sequence ID" value="AAC31694.1"/>
    <property type="molecule type" value="Genomic_DNA"/>
</dbReference>
<dbReference type="SMR" id="O78789"/>
<dbReference type="GO" id="GO:0005743">
    <property type="term" value="C:mitochondrial inner membrane"/>
    <property type="evidence" value="ECO:0007669"/>
    <property type="project" value="UniProtKB-SubCell"/>
</dbReference>
<dbReference type="GO" id="GO:0045275">
    <property type="term" value="C:respiratory chain complex III"/>
    <property type="evidence" value="ECO:0007669"/>
    <property type="project" value="InterPro"/>
</dbReference>
<dbReference type="GO" id="GO:0046872">
    <property type="term" value="F:metal ion binding"/>
    <property type="evidence" value="ECO:0007669"/>
    <property type="project" value="UniProtKB-KW"/>
</dbReference>
<dbReference type="GO" id="GO:0008121">
    <property type="term" value="F:ubiquinol-cytochrome-c reductase activity"/>
    <property type="evidence" value="ECO:0007669"/>
    <property type="project" value="InterPro"/>
</dbReference>
<dbReference type="GO" id="GO:0006122">
    <property type="term" value="P:mitochondrial electron transport, ubiquinol to cytochrome c"/>
    <property type="evidence" value="ECO:0007669"/>
    <property type="project" value="TreeGrafter"/>
</dbReference>
<dbReference type="CDD" id="cd00290">
    <property type="entry name" value="cytochrome_b_C"/>
    <property type="match status" value="1"/>
</dbReference>
<dbReference type="CDD" id="cd00284">
    <property type="entry name" value="Cytochrome_b_N"/>
    <property type="match status" value="1"/>
</dbReference>
<dbReference type="FunFam" id="1.20.810.10:FF:000002">
    <property type="entry name" value="Cytochrome b"/>
    <property type="match status" value="1"/>
</dbReference>
<dbReference type="Gene3D" id="1.20.810.10">
    <property type="entry name" value="Cytochrome Bc1 Complex, Chain C"/>
    <property type="match status" value="1"/>
</dbReference>
<dbReference type="InterPro" id="IPR005798">
    <property type="entry name" value="Cyt_b/b6_C"/>
</dbReference>
<dbReference type="InterPro" id="IPR036150">
    <property type="entry name" value="Cyt_b/b6_C_sf"/>
</dbReference>
<dbReference type="InterPro" id="IPR005797">
    <property type="entry name" value="Cyt_b/b6_N"/>
</dbReference>
<dbReference type="InterPro" id="IPR027387">
    <property type="entry name" value="Cytb/b6-like_sf"/>
</dbReference>
<dbReference type="InterPro" id="IPR030689">
    <property type="entry name" value="Cytochrome_b"/>
</dbReference>
<dbReference type="InterPro" id="IPR048260">
    <property type="entry name" value="Cytochrome_b_C_euk/bac"/>
</dbReference>
<dbReference type="InterPro" id="IPR048259">
    <property type="entry name" value="Cytochrome_b_N_euk/bac"/>
</dbReference>
<dbReference type="InterPro" id="IPR016174">
    <property type="entry name" value="Di-haem_cyt_TM"/>
</dbReference>
<dbReference type="PANTHER" id="PTHR19271">
    <property type="entry name" value="CYTOCHROME B"/>
    <property type="match status" value="1"/>
</dbReference>
<dbReference type="PANTHER" id="PTHR19271:SF16">
    <property type="entry name" value="CYTOCHROME B"/>
    <property type="match status" value="1"/>
</dbReference>
<dbReference type="Pfam" id="PF00032">
    <property type="entry name" value="Cytochrom_B_C"/>
    <property type="match status" value="1"/>
</dbReference>
<dbReference type="Pfam" id="PF00033">
    <property type="entry name" value="Cytochrome_B"/>
    <property type="match status" value="1"/>
</dbReference>
<dbReference type="PIRSF" id="PIRSF038885">
    <property type="entry name" value="COB"/>
    <property type="match status" value="1"/>
</dbReference>
<dbReference type="SUPFAM" id="SSF81648">
    <property type="entry name" value="a domain/subunit of cytochrome bc1 complex (Ubiquinol-cytochrome c reductase)"/>
    <property type="match status" value="1"/>
</dbReference>
<dbReference type="SUPFAM" id="SSF81342">
    <property type="entry name" value="Transmembrane di-heme cytochromes"/>
    <property type="match status" value="1"/>
</dbReference>
<dbReference type="PROSITE" id="PS51003">
    <property type="entry name" value="CYTB_CTER"/>
    <property type="match status" value="1"/>
</dbReference>
<dbReference type="PROSITE" id="PS51002">
    <property type="entry name" value="CYTB_NTER"/>
    <property type="match status" value="1"/>
</dbReference>